<gene>
    <name evidence="18" type="primary">shg</name>
    <name evidence="18" type="synonym">E-cadherin</name>
    <name evidence="18" type="ORF">CG3722</name>
</gene>
<proteinExistence type="evidence at protein level"/>
<keyword id="KW-0106">Calcium</keyword>
<keyword id="KW-0130">Cell adhesion</keyword>
<keyword id="KW-1003">Cell membrane</keyword>
<keyword id="KW-0165">Cleavage on pair of basic residues</keyword>
<keyword id="KW-1015">Disulfide bond</keyword>
<keyword id="KW-0245">EGF-like domain</keyword>
<keyword id="KW-0325">Glycoprotein</keyword>
<keyword id="KW-0472">Membrane</keyword>
<keyword id="KW-0479">Metal-binding</keyword>
<keyword id="KW-0597">Phosphoprotein</keyword>
<keyword id="KW-1185">Reference proteome</keyword>
<keyword id="KW-0677">Repeat</keyword>
<keyword id="KW-0732">Signal</keyword>
<keyword id="KW-0812">Transmembrane</keyword>
<keyword id="KW-1133">Transmembrane helix</keyword>
<protein>
    <recommendedName>
        <fullName>DE-cadherin</fullName>
    </recommendedName>
    <alternativeName>
        <fullName>Protein shotgun</fullName>
    </alternativeName>
</protein>
<name>CADE_DROME</name>
<accession>Q24298</accession>
<accession>Q9W2N1</accession>
<evidence type="ECO:0000250" key="1">
    <source>
        <dbReference type="UniProtKB" id="P12830"/>
    </source>
</evidence>
<evidence type="ECO:0000255" key="2"/>
<evidence type="ECO:0000255" key="3">
    <source>
        <dbReference type="PROSITE-ProRule" id="PRU00043"/>
    </source>
</evidence>
<evidence type="ECO:0000255" key="4">
    <source>
        <dbReference type="PROSITE-ProRule" id="PRU00076"/>
    </source>
</evidence>
<evidence type="ECO:0000255" key="5">
    <source>
        <dbReference type="PROSITE-ProRule" id="PRU00122"/>
    </source>
</evidence>
<evidence type="ECO:0000256" key="6">
    <source>
        <dbReference type="SAM" id="MobiDB-lite"/>
    </source>
</evidence>
<evidence type="ECO:0000269" key="7">
    <source>
    </source>
</evidence>
<evidence type="ECO:0000269" key="8">
    <source>
    </source>
</evidence>
<evidence type="ECO:0000269" key="9">
    <source>
    </source>
</evidence>
<evidence type="ECO:0000269" key="10">
    <source>
    </source>
</evidence>
<evidence type="ECO:0000269" key="11">
    <source>
    </source>
</evidence>
<evidence type="ECO:0000269" key="12">
    <source>
    </source>
</evidence>
<evidence type="ECO:0000269" key="13">
    <source>
    </source>
</evidence>
<evidence type="ECO:0000269" key="14">
    <source>
    </source>
</evidence>
<evidence type="ECO:0000269" key="15">
    <source>
    </source>
</evidence>
<evidence type="ECO:0000305" key="16"/>
<evidence type="ECO:0000305" key="17">
    <source>
    </source>
</evidence>
<evidence type="ECO:0000312" key="18">
    <source>
        <dbReference type="FlyBase" id="FBgn0003391"/>
    </source>
</evidence>
<feature type="signal peptide" evidence="2">
    <location>
        <begin position="1"/>
        <end position="69"/>
    </location>
</feature>
<feature type="propeptide" id="PRO_0000003879" evidence="2">
    <location>
        <begin position="70"/>
        <end position="261"/>
    </location>
</feature>
<feature type="chain" id="PRO_0000003880" description="DE-cadherin">
    <location>
        <begin position="262"/>
        <end position="1507"/>
    </location>
</feature>
<feature type="topological domain" description="Extracellular" evidence="2">
    <location>
        <begin position="262"/>
        <end position="1328"/>
    </location>
</feature>
<feature type="transmembrane region" description="Helical" evidence="2">
    <location>
        <begin position="1329"/>
        <end position="1349"/>
    </location>
</feature>
<feature type="topological domain" description="Cytoplasmic" evidence="2">
    <location>
        <begin position="1350"/>
        <end position="1507"/>
    </location>
</feature>
<feature type="domain" description="Cadherin 1" evidence="3">
    <location>
        <begin position="97"/>
        <end position="195"/>
    </location>
</feature>
<feature type="domain" description="Cadherin 2" evidence="3">
    <location>
        <begin position="204"/>
        <end position="301"/>
    </location>
</feature>
<feature type="domain" description="Cadherin 3" evidence="3">
    <location>
        <begin position="311"/>
        <end position="412"/>
    </location>
</feature>
<feature type="domain" description="Cadherin 4" evidence="3">
    <location>
        <begin position="420"/>
        <end position="522"/>
    </location>
</feature>
<feature type="domain" description="Cadherin 5" evidence="3">
    <location>
        <begin position="532"/>
        <end position="633"/>
    </location>
</feature>
<feature type="domain" description="Cadherin 6" evidence="3">
    <location>
        <begin position="631"/>
        <end position="733"/>
    </location>
</feature>
<feature type="domain" description="Cadherin 7" evidence="3">
    <location>
        <begin position="741"/>
        <end position="835"/>
    </location>
</feature>
<feature type="domain" description="EGF-like" evidence="4">
    <location>
        <begin position="1084"/>
        <end position="1123"/>
    </location>
</feature>
<feature type="domain" description="Laminin G-like" evidence="5">
    <location>
        <begin position="1125"/>
        <end position="1313"/>
    </location>
</feature>
<feature type="region of interest" description="Interaction with Inx2">
    <location>
        <begin position="1350"/>
        <end position="1507"/>
    </location>
</feature>
<feature type="region of interest" description="Disordered" evidence="6">
    <location>
        <begin position="1488"/>
        <end position="1507"/>
    </location>
</feature>
<feature type="modified residue" description="Phosphoserine" evidence="9">
    <location>
        <position position="1493"/>
    </location>
</feature>
<feature type="glycosylation site" description="N-linked (GlcNAc...) asparagine" evidence="2">
    <location>
        <position position="317"/>
    </location>
</feature>
<feature type="glycosylation site" description="N-linked (GlcNAc...) asparagine" evidence="2">
    <location>
        <position position="466"/>
    </location>
</feature>
<feature type="glycosylation site" description="N-linked (GlcNAc...) asparagine" evidence="2">
    <location>
        <position position="552"/>
    </location>
</feature>
<feature type="glycosylation site" description="N-linked (GlcNAc...) asparagine" evidence="2">
    <location>
        <position position="766"/>
    </location>
</feature>
<feature type="glycosylation site" description="N-linked (GlcNAc...) asparagine" evidence="2">
    <location>
        <position position="949"/>
    </location>
</feature>
<feature type="glycosylation site" description="N-linked (GlcNAc...) asparagine" evidence="2">
    <location>
        <position position="983"/>
    </location>
</feature>
<feature type="glycosylation site" description="N-linked (GlcNAc...) asparagine" evidence="2">
    <location>
        <position position="999"/>
    </location>
</feature>
<feature type="glycosylation site" description="N-linked (GlcNAc...) asparagine" evidence="2">
    <location>
        <position position="1073"/>
    </location>
</feature>
<feature type="glycosylation site" description="N-linked (GlcNAc...) asparagine" evidence="2">
    <location>
        <position position="1145"/>
    </location>
</feature>
<feature type="glycosylation site" description="N-linked (GlcNAc...) asparagine" evidence="2">
    <location>
        <position position="1274"/>
    </location>
</feature>
<feature type="glycosylation site" description="N-linked (GlcNAc...) asparagine" evidence="2">
    <location>
        <position position="1290"/>
    </location>
</feature>
<feature type="disulfide bond" evidence="4">
    <location>
        <begin position="1098"/>
        <end position="1112"/>
    </location>
</feature>
<feature type="disulfide bond" evidence="4">
    <location>
        <begin position="1114"/>
        <end position="1123"/>
    </location>
</feature>
<feature type="disulfide bond" evidence="5">
    <location>
        <begin position="1287"/>
        <end position="1313"/>
    </location>
</feature>
<feature type="sequence conflict" description="In Ref. 1; BAA05942." evidence="16" ref="1">
    <original>L</original>
    <variation>F</variation>
    <location>
        <position position="974"/>
    </location>
</feature>
<dbReference type="EMBL" id="D28749">
    <property type="protein sequence ID" value="BAA05942.1"/>
    <property type="molecule type" value="mRNA"/>
</dbReference>
<dbReference type="EMBL" id="AE013599">
    <property type="protein sequence ID" value="AAF46659.1"/>
    <property type="molecule type" value="Genomic_DNA"/>
</dbReference>
<dbReference type="RefSeq" id="NP_476722.1">
    <property type="nucleotide sequence ID" value="NM_057374.3"/>
</dbReference>
<dbReference type="SMR" id="Q24298"/>
<dbReference type="BioGRID" id="63025">
    <property type="interactions" value="92"/>
</dbReference>
<dbReference type="DIP" id="DIP-22198N"/>
<dbReference type="FunCoup" id="Q24298">
    <property type="interactions" value="184"/>
</dbReference>
<dbReference type="IntAct" id="Q24298">
    <property type="interactions" value="7"/>
</dbReference>
<dbReference type="STRING" id="7227.FBpp0071475"/>
<dbReference type="GlyCosmos" id="Q24298">
    <property type="glycosylation" value="11 sites, No reported glycans"/>
</dbReference>
<dbReference type="GlyGen" id="Q24298">
    <property type="glycosylation" value="11 sites"/>
</dbReference>
<dbReference type="iPTMnet" id="Q24298"/>
<dbReference type="PaxDb" id="7227-FBpp0071475"/>
<dbReference type="EnsemblMetazoa" id="FBtr0071546">
    <property type="protein sequence ID" value="FBpp0071475"/>
    <property type="gene ID" value="FBgn0003391"/>
</dbReference>
<dbReference type="GeneID" id="37386"/>
<dbReference type="KEGG" id="dme:Dmel_CG3722"/>
<dbReference type="AGR" id="FB:FBgn0003391"/>
<dbReference type="CTD" id="37386"/>
<dbReference type="FlyBase" id="FBgn0003391">
    <property type="gene designation" value="shg"/>
</dbReference>
<dbReference type="VEuPathDB" id="VectorBase:FBgn0003391"/>
<dbReference type="eggNOG" id="KOG3594">
    <property type="taxonomic scope" value="Eukaryota"/>
</dbReference>
<dbReference type="GeneTree" id="ENSGT00940000172755"/>
<dbReference type="HOGENOM" id="CLU_247555_0_0_1"/>
<dbReference type="InParanoid" id="Q24298"/>
<dbReference type="OMA" id="EQPENTY"/>
<dbReference type="OrthoDB" id="6252479at2759"/>
<dbReference type="PhylomeDB" id="Q24298"/>
<dbReference type="SignaLink" id="Q24298"/>
<dbReference type="BioGRID-ORCS" id="37386">
    <property type="hits" value="0 hits in 1 CRISPR screen"/>
</dbReference>
<dbReference type="GenomeRNAi" id="37386"/>
<dbReference type="PRO" id="PR:Q24298"/>
<dbReference type="Proteomes" id="UP000000803">
    <property type="component" value="Chromosome 2R"/>
</dbReference>
<dbReference type="Bgee" id="FBgn0003391">
    <property type="expression patterns" value="Expressed in polar follicle cell (Drosophila) in ovary and 271 other cell types or tissues"/>
</dbReference>
<dbReference type="GO" id="GO:0005912">
    <property type="term" value="C:adherens junction"/>
    <property type="evidence" value="ECO:0000314"/>
    <property type="project" value="FlyBase"/>
</dbReference>
<dbReference type="GO" id="GO:0043296">
    <property type="term" value="C:apical junction complex"/>
    <property type="evidence" value="ECO:0000314"/>
    <property type="project" value="FlyBase"/>
</dbReference>
<dbReference type="GO" id="GO:0016324">
    <property type="term" value="C:apical plasma membrane"/>
    <property type="evidence" value="ECO:0007669"/>
    <property type="project" value="UniProtKB-SubCell"/>
</dbReference>
<dbReference type="GO" id="GO:0016342">
    <property type="term" value="C:catenin complex"/>
    <property type="evidence" value="ECO:0000314"/>
    <property type="project" value="FlyBase"/>
</dbReference>
<dbReference type="GO" id="GO:0005938">
    <property type="term" value="C:cell cortex"/>
    <property type="evidence" value="ECO:0000314"/>
    <property type="project" value="FlyBase"/>
</dbReference>
<dbReference type="GO" id="GO:0030175">
    <property type="term" value="C:filopodium"/>
    <property type="evidence" value="ECO:0000314"/>
    <property type="project" value="FlyBase"/>
</dbReference>
<dbReference type="GO" id="GO:0005886">
    <property type="term" value="C:plasma membrane"/>
    <property type="evidence" value="ECO:0000314"/>
    <property type="project" value="UniProtKB"/>
</dbReference>
<dbReference type="GO" id="GO:0055037">
    <property type="term" value="C:recycling endosome"/>
    <property type="evidence" value="ECO:0000314"/>
    <property type="project" value="FlyBase"/>
</dbReference>
<dbReference type="GO" id="GO:0005914">
    <property type="term" value="C:spot adherens junction"/>
    <property type="evidence" value="ECO:0000314"/>
    <property type="project" value="FlyBase"/>
</dbReference>
<dbReference type="GO" id="GO:0008013">
    <property type="term" value="F:beta-catenin binding"/>
    <property type="evidence" value="ECO:0000353"/>
    <property type="project" value="CAFA"/>
</dbReference>
<dbReference type="GO" id="GO:0005509">
    <property type="term" value="F:calcium ion binding"/>
    <property type="evidence" value="ECO:0000314"/>
    <property type="project" value="FlyBase"/>
</dbReference>
<dbReference type="GO" id="GO:0017022">
    <property type="term" value="F:myosin binding"/>
    <property type="evidence" value="ECO:0000353"/>
    <property type="project" value="FlyBase"/>
</dbReference>
<dbReference type="GO" id="GO:0042803">
    <property type="term" value="F:protein homodimerization activity"/>
    <property type="evidence" value="ECO:0000353"/>
    <property type="project" value="FlyBase"/>
</dbReference>
<dbReference type="GO" id="GO:0045176">
    <property type="term" value="P:apical protein localization"/>
    <property type="evidence" value="ECO:0000315"/>
    <property type="project" value="FlyBase"/>
</dbReference>
<dbReference type="GO" id="GO:0008356">
    <property type="term" value="P:asymmetric cell division"/>
    <property type="evidence" value="ECO:0000315"/>
    <property type="project" value="FlyBase"/>
</dbReference>
<dbReference type="GO" id="GO:0007409">
    <property type="term" value="P:axonogenesis"/>
    <property type="evidence" value="ECO:0000315"/>
    <property type="project" value="FlyBase"/>
</dbReference>
<dbReference type="GO" id="GO:0007298">
    <property type="term" value="P:border follicle cell migration"/>
    <property type="evidence" value="ECO:0000315"/>
    <property type="project" value="FlyBase"/>
</dbReference>
<dbReference type="GO" id="GO:0007420">
    <property type="term" value="P:brain development"/>
    <property type="evidence" value="ECO:0000315"/>
    <property type="project" value="FlyBase"/>
</dbReference>
<dbReference type="GO" id="GO:0035147">
    <property type="term" value="P:branch fusion, open tracheal system"/>
    <property type="evidence" value="ECO:0000315"/>
    <property type="project" value="FlyBase"/>
</dbReference>
<dbReference type="GO" id="GO:0016339">
    <property type="term" value="P:calcium-dependent cell-cell adhesion via plasma membrane cell adhesion molecules"/>
    <property type="evidence" value="ECO:0000314"/>
    <property type="project" value="FlyBase"/>
</dbReference>
<dbReference type="GO" id="GO:0007155">
    <property type="term" value="P:cell adhesion"/>
    <property type="evidence" value="ECO:0000315"/>
    <property type="project" value="FlyBase"/>
</dbReference>
<dbReference type="GO" id="GO:0035212">
    <property type="term" value="P:cell competition in a multicellular organism"/>
    <property type="evidence" value="ECO:0000315"/>
    <property type="project" value="FlyBase"/>
</dbReference>
<dbReference type="GO" id="GO:0090254">
    <property type="term" value="P:cell elongation involved in imaginal disc-derived wing morphogenesis"/>
    <property type="evidence" value="ECO:0000315"/>
    <property type="project" value="FlyBase"/>
</dbReference>
<dbReference type="GO" id="GO:0000902">
    <property type="term" value="P:cell morphogenesis"/>
    <property type="evidence" value="ECO:0000315"/>
    <property type="project" value="FlyBase"/>
</dbReference>
<dbReference type="GO" id="GO:0030031">
    <property type="term" value="P:cell projection assembly"/>
    <property type="evidence" value="ECO:0000315"/>
    <property type="project" value="FlyBase"/>
</dbReference>
<dbReference type="GO" id="GO:0098609">
    <property type="term" value="P:cell-cell adhesion"/>
    <property type="evidence" value="ECO:0000315"/>
    <property type="project" value="FlyBase"/>
</dbReference>
<dbReference type="GO" id="GO:0044331">
    <property type="term" value="P:cell-cell adhesion mediated by cadherin"/>
    <property type="evidence" value="ECO:0000314"/>
    <property type="project" value="FlyBase"/>
</dbReference>
<dbReference type="GO" id="GO:0001745">
    <property type="term" value="P:compound eye morphogenesis"/>
    <property type="evidence" value="ECO:0000315"/>
    <property type="project" value="FlyBase"/>
</dbReference>
<dbReference type="GO" id="GO:0071907">
    <property type="term" value="P:determination of digestive tract left/right asymmetry"/>
    <property type="evidence" value="ECO:0000315"/>
    <property type="project" value="FlyBase"/>
</dbReference>
<dbReference type="GO" id="GO:0036099">
    <property type="term" value="P:female germ-line stem cell population maintenance"/>
    <property type="evidence" value="ECO:0000315"/>
    <property type="project" value="FlyBase"/>
</dbReference>
<dbReference type="GO" id="GO:0010004">
    <property type="term" value="P:gastrulation involving germ band extension"/>
    <property type="evidence" value="ECO:0000315"/>
    <property type="project" value="FlyBase"/>
</dbReference>
<dbReference type="GO" id="GO:0007281">
    <property type="term" value="P:germ cell development"/>
    <property type="evidence" value="ECO:0000315"/>
    <property type="project" value="FlyBase"/>
</dbReference>
<dbReference type="GO" id="GO:0008354">
    <property type="term" value="P:germ cell migration"/>
    <property type="evidence" value="ECO:0000315"/>
    <property type="project" value="FlyBase"/>
</dbReference>
<dbReference type="GO" id="GO:0008406">
    <property type="term" value="P:gonad development"/>
    <property type="evidence" value="ECO:0000315"/>
    <property type="project" value="FlyBase"/>
</dbReference>
<dbReference type="GO" id="GO:0035262">
    <property type="term" value="P:gonad morphogenesis"/>
    <property type="evidence" value="ECO:0000315"/>
    <property type="project" value="FlyBase"/>
</dbReference>
<dbReference type="GO" id="GO:0007506">
    <property type="term" value="P:gonadal mesoderm development"/>
    <property type="evidence" value="ECO:0000315"/>
    <property type="project" value="FlyBase"/>
</dbReference>
<dbReference type="GO" id="GO:0008258">
    <property type="term" value="P:head involution"/>
    <property type="evidence" value="ECO:0000315"/>
    <property type="project" value="FlyBase"/>
</dbReference>
<dbReference type="GO" id="GO:0007507">
    <property type="term" value="P:heart development"/>
    <property type="evidence" value="ECO:0000315"/>
    <property type="project" value="FlyBase"/>
</dbReference>
<dbReference type="GO" id="GO:0035099">
    <property type="term" value="P:hemocyte migration"/>
    <property type="evidence" value="ECO:0000316"/>
    <property type="project" value="FlyBase"/>
</dbReference>
<dbReference type="GO" id="GO:0007156">
    <property type="term" value="P:homophilic cell adhesion via plasma membrane adhesion molecules"/>
    <property type="evidence" value="ECO:0000314"/>
    <property type="project" value="FlyBase"/>
</dbReference>
<dbReference type="GO" id="GO:0001748">
    <property type="term" value="P:insect visual primordium development"/>
    <property type="evidence" value="ECO:0000315"/>
    <property type="project" value="FlyBase"/>
</dbReference>
<dbReference type="GO" id="GO:0035160">
    <property type="term" value="P:maintenance of epithelial integrity, open tracheal system"/>
    <property type="evidence" value="ECO:0000315"/>
    <property type="project" value="FlyBase"/>
</dbReference>
<dbReference type="GO" id="GO:0098730">
    <property type="term" value="P:male germline stem cell symmetric division"/>
    <property type="evidence" value="ECO:0000315"/>
    <property type="project" value="FlyBase"/>
</dbReference>
<dbReference type="GO" id="GO:0001738">
    <property type="term" value="P:morphogenesis of a polarized epithelium"/>
    <property type="evidence" value="ECO:0000315"/>
    <property type="project" value="FlyBase"/>
</dbReference>
<dbReference type="GO" id="GO:0007399">
    <property type="term" value="P:nervous system development"/>
    <property type="evidence" value="ECO:0000315"/>
    <property type="project" value="FlyBase"/>
</dbReference>
<dbReference type="GO" id="GO:0016318">
    <property type="term" value="P:ommatidial rotation"/>
    <property type="evidence" value="ECO:0000315"/>
    <property type="project" value="FlyBase"/>
</dbReference>
<dbReference type="GO" id="GO:0030720">
    <property type="term" value="P:oocyte localization involved in germarium-derived egg chamber formation"/>
    <property type="evidence" value="ECO:0000304"/>
    <property type="project" value="FlyBase"/>
</dbReference>
<dbReference type="GO" id="GO:0048477">
    <property type="term" value="P:oogenesis"/>
    <property type="evidence" value="ECO:0000315"/>
    <property type="project" value="FlyBase"/>
</dbReference>
<dbReference type="GO" id="GO:0007424">
    <property type="term" value="P:open tracheal system development"/>
    <property type="evidence" value="ECO:0000315"/>
    <property type="project" value="FlyBase"/>
</dbReference>
<dbReference type="GO" id="GO:0003151">
    <property type="term" value="P:outflow tract morphogenesis"/>
    <property type="evidence" value="ECO:0000315"/>
    <property type="project" value="FlyBase"/>
</dbReference>
<dbReference type="GO" id="GO:1903688">
    <property type="term" value="P:positive regulation of border follicle cell migration"/>
    <property type="evidence" value="ECO:0000315"/>
    <property type="project" value="FlyBase"/>
</dbReference>
<dbReference type="GO" id="GO:0046427">
    <property type="term" value="P:positive regulation of receptor signaling pathway via JAK-STAT"/>
    <property type="evidence" value="ECO:0000316"/>
    <property type="project" value="FlyBase"/>
</dbReference>
<dbReference type="GO" id="GO:0007435">
    <property type="term" value="P:salivary gland morphogenesis"/>
    <property type="evidence" value="ECO:0000316"/>
    <property type="project" value="FlyBase"/>
</dbReference>
<dbReference type="GO" id="GO:0007379">
    <property type="term" value="P:segment specification"/>
    <property type="evidence" value="ECO:0000315"/>
    <property type="project" value="FlyBase"/>
</dbReference>
<dbReference type="GO" id="GO:0035019">
    <property type="term" value="P:somatic stem cell population maintenance"/>
    <property type="evidence" value="ECO:0000315"/>
    <property type="project" value="FlyBase"/>
</dbReference>
<dbReference type="GO" id="GO:0007370">
    <property type="term" value="P:ventral furrow formation"/>
    <property type="evidence" value="ECO:0000315"/>
    <property type="project" value="FlyBase"/>
</dbReference>
<dbReference type="GO" id="GO:0042060">
    <property type="term" value="P:wound healing"/>
    <property type="evidence" value="ECO:0000315"/>
    <property type="project" value="FlyBase"/>
</dbReference>
<dbReference type="GO" id="GO:0045186">
    <property type="term" value="P:zonula adherens assembly"/>
    <property type="evidence" value="ECO:0000315"/>
    <property type="project" value="FlyBase"/>
</dbReference>
<dbReference type="CDD" id="cd11304">
    <property type="entry name" value="Cadherin_repeat"/>
    <property type="match status" value="6"/>
</dbReference>
<dbReference type="CDD" id="cd00110">
    <property type="entry name" value="LamG"/>
    <property type="match status" value="1"/>
</dbReference>
<dbReference type="DisProt" id="DP00269"/>
<dbReference type="FunFam" id="2.60.40.60:FF:000280">
    <property type="entry name" value="AGAP007203-PA-like protein"/>
    <property type="match status" value="1"/>
</dbReference>
<dbReference type="FunFam" id="2.60.120.200:FF:000214">
    <property type="entry name" value="DE cadherin-like protein"/>
    <property type="match status" value="1"/>
</dbReference>
<dbReference type="FunFam" id="2.60.40.60:FF:000272">
    <property type="entry name" value="DE cadherin-like protein"/>
    <property type="match status" value="1"/>
</dbReference>
<dbReference type="FunFam" id="2.60.40.60:FF:000277">
    <property type="entry name" value="DE-cadherin"/>
    <property type="match status" value="1"/>
</dbReference>
<dbReference type="FunFam" id="2.60.40.60:FF:000293">
    <property type="entry name" value="DE-cadherin"/>
    <property type="match status" value="1"/>
</dbReference>
<dbReference type="FunFam" id="2.60.40.60:FF:000298">
    <property type="entry name" value="DE-cadherin"/>
    <property type="match status" value="1"/>
</dbReference>
<dbReference type="FunFam" id="2.60.40.60:FF:000032">
    <property type="entry name" value="FAT atypical cadherin 1"/>
    <property type="match status" value="1"/>
</dbReference>
<dbReference type="FunFam" id="2.60.40.60:FF:000058">
    <property type="entry name" value="FAT atypical cadherin 3"/>
    <property type="match status" value="1"/>
</dbReference>
<dbReference type="FunFam" id="4.10.900.10:FF:000012">
    <property type="entry name" value="Putative DE-cadherin"/>
    <property type="match status" value="1"/>
</dbReference>
<dbReference type="Gene3D" id="2.60.120.200">
    <property type="match status" value="1"/>
</dbReference>
<dbReference type="Gene3D" id="2.60.40.60">
    <property type="entry name" value="Cadherins"/>
    <property type="match status" value="7"/>
</dbReference>
<dbReference type="Gene3D" id="2.10.25.10">
    <property type="entry name" value="Laminin"/>
    <property type="match status" value="1"/>
</dbReference>
<dbReference type="Gene3D" id="4.10.900.10">
    <property type="entry name" value="TCF3-CBD (Catenin binding domain)"/>
    <property type="match status" value="1"/>
</dbReference>
<dbReference type="InterPro" id="IPR039808">
    <property type="entry name" value="Cadherin"/>
</dbReference>
<dbReference type="InterPro" id="IPR002126">
    <property type="entry name" value="Cadherin-like_dom"/>
</dbReference>
<dbReference type="InterPro" id="IPR015919">
    <property type="entry name" value="Cadherin-like_sf"/>
</dbReference>
<dbReference type="InterPro" id="IPR020894">
    <property type="entry name" value="Cadherin_CS"/>
</dbReference>
<dbReference type="InterPro" id="IPR000233">
    <property type="entry name" value="Cadherin_Y-type_LIR"/>
</dbReference>
<dbReference type="InterPro" id="IPR027397">
    <property type="entry name" value="Catenin-bd_sf"/>
</dbReference>
<dbReference type="InterPro" id="IPR013320">
    <property type="entry name" value="ConA-like_dom_sf"/>
</dbReference>
<dbReference type="InterPro" id="IPR000742">
    <property type="entry name" value="EGF-like_dom"/>
</dbReference>
<dbReference type="InterPro" id="IPR001791">
    <property type="entry name" value="Laminin_G"/>
</dbReference>
<dbReference type="InterPro" id="IPR056370">
    <property type="entry name" value="Shg-like_Ig-like"/>
</dbReference>
<dbReference type="PANTHER" id="PTHR24027:SF422">
    <property type="entry name" value="CADHERIN DOMAIN-CONTAINING PROTEIN"/>
    <property type="match status" value="1"/>
</dbReference>
<dbReference type="PANTHER" id="PTHR24027">
    <property type="entry name" value="CADHERIN-23"/>
    <property type="match status" value="1"/>
</dbReference>
<dbReference type="Pfam" id="PF01049">
    <property type="entry name" value="CADH_Y-type_LIR"/>
    <property type="match status" value="1"/>
</dbReference>
<dbReference type="Pfam" id="PF00028">
    <property type="entry name" value="Cadherin"/>
    <property type="match status" value="5"/>
</dbReference>
<dbReference type="Pfam" id="PF24811">
    <property type="entry name" value="Ig_Shg"/>
    <property type="match status" value="1"/>
</dbReference>
<dbReference type="Pfam" id="PF02210">
    <property type="entry name" value="Laminin_G_2"/>
    <property type="match status" value="1"/>
</dbReference>
<dbReference type="PRINTS" id="PR00205">
    <property type="entry name" value="CADHERIN"/>
</dbReference>
<dbReference type="SMART" id="SM00112">
    <property type="entry name" value="CA"/>
    <property type="match status" value="7"/>
</dbReference>
<dbReference type="SMART" id="SM00282">
    <property type="entry name" value="LamG"/>
    <property type="match status" value="1"/>
</dbReference>
<dbReference type="SUPFAM" id="SSF49313">
    <property type="entry name" value="Cadherin-like"/>
    <property type="match status" value="8"/>
</dbReference>
<dbReference type="SUPFAM" id="SSF49899">
    <property type="entry name" value="Concanavalin A-like lectins/glucanases"/>
    <property type="match status" value="1"/>
</dbReference>
<dbReference type="PROSITE" id="PS00232">
    <property type="entry name" value="CADHERIN_1"/>
    <property type="match status" value="5"/>
</dbReference>
<dbReference type="PROSITE" id="PS50268">
    <property type="entry name" value="CADHERIN_2"/>
    <property type="match status" value="7"/>
</dbReference>
<dbReference type="PROSITE" id="PS00022">
    <property type="entry name" value="EGF_1"/>
    <property type="match status" value="1"/>
</dbReference>
<dbReference type="PROSITE" id="PS01186">
    <property type="entry name" value="EGF_2"/>
    <property type="match status" value="1"/>
</dbReference>
<dbReference type="PROSITE" id="PS50026">
    <property type="entry name" value="EGF_3"/>
    <property type="match status" value="1"/>
</dbReference>
<dbReference type="PROSITE" id="PS50025">
    <property type="entry name" value="LAM_G_DOMAIN"/>
    <property type="match status" value="1"/>
</dbReference>
<reference key="1">
    <citation type="journal article" date="1994" name="Dev. Biol.">
        <title>A Drosophila homolog of cadherin associated with armadillo and essential for embryonic cell-cell adhesion.</title>
        <authorList>
            <person name="Oda H."/>
            <person name="Uemura T."/>
            <person name="Harada Y."/>
            <person name="Iwai Y."/>
            <person name="Takeichi M."/>
        </authorList>
    </citation>
    <scope>NUCLEOTIDE SEQUENCE [MRNA]</scope>
    <scope>FUNCTION</scope>
    <scope>TISSUE SPECIFICITY</scope>
    <source>
        <tissue>Embryo</tissue>
    </source>
</reference>
<reference key="2">
    <citation type="journal article" date="2000" name="Science">
        <title>The genome sequence of Drosophila melanogaster.</title>
        <authorList>
            <person name="Adams M.D."/>
            <person name="Celniker S.E."/>
            <person name="Holt R.A."/>
            <person name="Evans C.A."/>
            <person name="Gocayne J.D."/>
            <person name="Amanatides P.G."/>
            <person name="Scherer S.E."/>
            <person name="Li P.W."/>
            <person name="Hoskins R.A."/>
            <person name="Galle R.F."/>
            <person name="George R.A."/>
            <person name="Lewis S.E."/>
            <person name="Richards S."/>
            <person name="Ashburner M."/>
            <person name="Henderson S.N."/>
            <person name="Sutton G.G."/>
            <person name="Wortman J.R."/>
            <person name="Yandell M.D."/>
            <person name="Zhang Q."/>
            <person name="Chen L.X."/>
            <person name="Brandon R.C."/>
            <person name="Rogers Y.-H.C."/>
            <person name="Blazej R.G."/>
            <person name="Champe M."/>
            <person name="Pfeiffer B.D."/>
            <person name="Wan K.H."/>
            <person name="Doyle C."/>
            <person name="Baxter E.G."/>
            <person name="Helt G."/>
            <person name="Nelson C.R."/>
            <person name="Miklos G.L.G."/>
            <person name="Abril J.F."/>
            <person name="Agbayani A."/>
            <person name="An H.-J."/>
            <person name="Andrews-Pfannkoch C."/>
            <person name="Baldwin D."/>
            <person name="Ballew R.M."/>
            <person name="Basu A."/>
            <person name="Baxendale J."/>
            <person name="Bayraktaroglu L."/>
            <person name="Beasley E.M."/>
            <person name="Beeson K.Y."/>
            <person name="Benos P.V."/>
            <person name="Berman B.P."/>
            <person name="Bhandari D."/>
            <person name="Bolshakov S."/>
            <person name="Borkova D."/>
            <person name="Botchan M.R."/>
            <person name="Bouck J."/>
            <person name="Brokstein P."/>
            <person name="Brottier P."/>
            <person name="Burtis K.C."/>
            <person name="Busam D.A."/>
            <person name="Butler H."/>
            <person name="Cadieu E."/>
            <person name="Center A."/>
            <person name="Chandra I."/>
            <person name="Cherry J.M."/>
            <person name="Cawley S."/>
            <person name="Dahlke C."/>
            <person name="Davenport L.B."/>
            <person name="Davies P."/>
            <person name="de Pablos B."/>
            <person name="Delcher A."/>
            <person name="Deng Z."/>
            <person name="Mays A.D."/>
            <person name="Dew I."/>
            <person name="Dietz S.M."/>
            <person name="Dodson K."/>
            <person name="Doup L.E."/>
            <person name="Downes M."/>
            <person name="Dugan-Rocha S."/>
            <person name="Dunkov B.C."/>
            <person name="Dunn P."/>
            <person name="Durbin K.J."/>
            <person name="Evangelista C.C."/>
            <person name="Ferraz C."/>
            <person name="Ferriera S."/>
            <person name="Fleischmann W."/>
            <person name="Fosler C."/>
            <person name="Gabrielian A.E."/>
            <person name="Garg N.S."/>
            <person name="Gelbart W.M."/>
            <person name="Glasser K."/>
            <person name="Glodek A."/>
            <person name="Gong F."/>
            <person name="Gorrell J.H."/>
            <person name="Gu Z."/>
            <person name="Guan P."/>
            <person name="Harris M."/>
            <person name="Harris N.L."/>
            <person name="Harvey D.A."/>
            <person name="Heiman T.J."/>
            <person name="Hernandez J.R."/>
            <person name="Houck J."/>
            <person name="Hostin D."/>
            <person name="Houston K.A."/>
            <person name="Howland T.J."/>
            <person name="Wei M.-H."/>
            <person name="Ibegwam C."/>
            <person name="Jalali M."/>
            <person name="Kalush F."/>
            <person name="Karpen G.H."/>
            <person name="Ke Z."/>
            <person name="Kennison J.A."/>
            <person name="Ketchum K.A."/>
            <person name="Kimmel B.E."/>
            <person name="Kodira C.D."/>
            <person name="Kraft C.L."/>
            <person name="Kravitz S."/>
            <person name="Kulp D."/>
            <person name="Lai Z."/>
            <person name="Lasko P."/>
            <person name="Lei Y."/>
            <person name="Levitsky A.A."/>
            <person name="Li J.H."/>
            <person name="Li Z."/>
            <person name="Liang Y."/>
            <person name="Lin X."/>
            <person name="Liu X."/>
            <person name="Mattei B."/>
            <person name="McIntosh T.C."/>
            <person name="McLeod M.P."/>
            <person name="McPherson D."/>
            <person name="Merkulov G."/>
            <person name="Milshina N.V."/>
            <person name="Mobarry C."/>
            <person name="Morris J."/>
            <person name="Moshrefi A."/>
            <person name="Mount S.M."/>
            <person name="Moy M."/>
            <person name="Murphy B."/>
            <person name="Murphy L."/>
            <person name="Muzny D.M."/>
            <person name="Nelson D.L."/>
            <person name="Nelson D.R."/>
            <person name="Nelson K.A."/>
            <person name="Nixon K."/>
            <person name="Nusskern D.R."/>
            <person name="Pacleb J.M."/>
            <person name="Palazzolo M."/>
            <person name="Pittman G.S."/>
            <person name="Pan S."/>
            <person name="Pollard J."/>
            <person name="Puri V."/>
            <person name="Reese M.G."/>
            <person name="Reinert K."/>
            <person name="Remington K."/>
            <person name="Saunders R.D.C."/>
            <person name="Scheeler F."/>
            <person name="Shen H."/>
            <person name="Shue B.C."/>
            <person name="Siden-Kiamos I."/>
            <person name="Simpson M."/>
            <person name="Skupski M.P."/>
            <person name="Smith T.J."/>
            <person name="Spier E."/>
            <person name="Spradling A.C."/>
            <person name="Stapleton M."/>
            <person name="Strong R."/>
            <person name="Sun E."/>
            <person name="Svirskas R."/>
            <person name="Tector C."/>
            <person name="Turner R."/>
            <person name="Venter E."/>
            <person name="Wang A.H."/>
            <person name="Wang X."/>
            <person name="Wang Z.-Y."/>
            <person name="Wassarman D.A."/>
            <person name="Weinstock G.M."/>
            <person name="Weissenbach J."/>
            <person name="Williams S.M."/>
            <person name="Woodage T."/>
            <person name="Worley K.C."/>
            <person name="Wu D."/>
            <person name="Yang S."/>
            <person name="Yao Q.A."/>
            <person name="Ye J."/>
            <person name="Yeh R.-F."/>
            <person name="Zaveri J.S."/>
            <person name="Zhan M."/>
            <person name="Zhang G."/>
            <person name="Zhao Q."/>
            <person name="Zheng L."/>
            <person name="Zheng X.H."/>
            <person name="Zhong F.N."/>
            <person name="Zhong W."/>
            <person name="Zhou X."/>
            <person name="Zhu S.C."/>
            <person name="Zhu X."/>
            <person name="Smith H.O."/>
            <person name="Gibbs R.A."/>
            <person name="Myers E.W."/>
            <person name="Rubin G.M."/>
            <person name="Venter J.C."/>
        </authorList>
    </citation>
    <scope>NUCLEOTIDE SEQUENCE [LARGE SCALE GENOMIC DNA]</scope>
    <source>
        <strain>Berkeley</strain>
    </source>
</reference>
<reference key="3">
    <citation type="journal article" date="2002" name="Genome Biol.">
        <title>Annotation of the Drosophila melanogaster euchromatic genome: a systematic review.</title>
        <authorList>
            <person name="Misra S."/>
            <person name="Crosby M.A."/>
            <person name="Mungall C.J."/>
            <person name="Matthews B.B."/>
            <person name="Campbell K.S."/>
            <person name="Hradecky P."/>
            <person name="Huang Y."/>
            <person name="Kaminker J.S."/>
            <person name="Millburn G.H."/>
            <person name="Prochnik S.E."/>
            <person name="Smith C.D."/>
            <person name="Tupy J.L."/>
            <person name="Whitfield E.J."/>
            <person name="Bayraktaroglu L."/>
            <person name="Berman B.P."/>
            <person name="Bettencourt B.R."/>
            <person name="Celniker S.E."/>
            <person name="de Grey A.D.N.J."/>
            <person name="Drysdale R.A."/>
            <person name="Harris N.L."/>
            <person name="Richter J."/>
            <person name="Russo S."/>
            <person name="Schroeder A.J."/>
            <person name="Shu S.Q."/>
            <person name="Stapleton M."/>
            <person name="Yamada C."/>
            <person name="Ashburner M."/>
            <person name="Gelbart W.M."/>
            <person name="Rubin G.M."/>
            <person name="Lewis S.E."/>
        </authorList>
    </citation>
    <scope>GENOME REANNOTATION</scope>
    <source>
        <strain>Berkeley</strain>
    </source>
</reference>
<reference key="4">
    <citation type="journal article" date="2008" name="J. Proteome Res.">
        <title>Phosphoproteome analysis of Drosophila melanogaster embryos.</title>
        <authorList>
            <person name="Zhai B."/>
            <person name="Villen J."/>
            <person name="Beausoleil S.A."/>
            <person name="Mintseris J."/>
            <person name="Gygi S.P."/>
        </authorList>
    </citation>
    <scope>PHOSPHORYLATION [LARGE SCALE ANALYSIS] AT SER-1493</scope>
    <scope>IDENTIFICATION BY MASS SPECTROMETRY</scope>
    <source>
        <tissue>Embryo</tissue>
    </source>
</reference>
<reference key="5">
    <citation type="journal article" date="2004" name="Mol. Biol. Cell">
        <title>Gap junction channel protein innexin 2 is essential for epithelial morphogenesis in the Drosophila embryo.</title>
        <authorList>
            <person name="Bauer R."/>
            <person name="Lehmann C."/>
            <person name="Martini J."/>
            <person name="Eckardt F."/>
            <person name="Hoch M."/>
        </authorList>
    </citation>
    <scope>INTERACTION WITH INX2</scope>
</reference>
<reference key="6">
    <citation type="journal article" date="2006" name="Development">
        <title>The Fes/Fer non-receptor tyrosine kinase cooperates with Src42A to regulate dorsal closure in Drosophila.</title>
        <authorList>
            <person name="Murray M.J."/>
            <person name="Davidson C.M."/>
            <person name="Hayward N.M."/>
            <person name="Brand A.H."/>
        </authorList>
    </citation>
    <scope>TISSUE SPECIFICITY</scope>
</reference>
<reference key="7">
    <citation type="journal article" date="2009" name="Genes Cells">
        <title>Essential requirement for RING finger E3 ubiquitin ligase Hakai in early embryonic development of Drosophila.</title>
        <authorList>
            <person name="Kaido M."/>
            <person name="Wada H."/>
            <person name="Shindo M."/>
            <person name="Hayashi S."/>
        </authorList>
    </citation>
    <scope>INTERACTION WITH HAKAI</scope>
</reference>
<reference key="8">
    <citation type="journal article" date="2012" name="Development">
        <title>DE-Cadherin regulates unconventional Myosin ID and Myosin IC in Drosophila left-right asymmetry establishment.</title>
        <authorList>
            <person name="Petzoldt A.G."/>
            <person name="Coutelis J.B."/>
            <person name="Geminard C."/>
            <person name="Speder P."/>
            <person name="Suzanne M."/>
            <person name="Cerezo D."/>
            <person name="Noselli S."/>
        </authorList>
    </citation>
    <scope>FUNCTION</scope>
    <scope>SUBCELLULAR LOCATION</scope>
    <scope>DISRUPTION PHENOTYPE</scope>
    <scope>INTERACTION WITH MYO31DF</scope>
</reference>
<reference key="9">
    <citation type="journal article" date="2014" name="Cell">
        <title>Mechanical feedback through E-cadherin promotes direction sensing during collective cell migration.</title>
        <authorList>
            <person name="Cai D."/>
            <person name="Chen S.C."/>
            <person name="Prasad M."/>
            <person name="He L."/>
            <person name="Wang X."/>
            <person name="Choesmel-Cadamuro V."/>
            <person name="Sawyer J.K."/>
            <person name="Danuser G."/>
            <person name="Montell D.J."/>
        </authorList>
    </citation>
    <scope>FUNCTION</scope>
    <scope>TISSUE SPECIFICITY</scope>
    <scope>DISRUPTION PHENOTYPE</scope>
</reference>
<reference key="10">
    <citation type="journal article" date="2014" name="Dev. Biol.">
        <title>The glucosyltransferase Xiantuan of the endoplasmic reticulum specifically affects E-Cadherin expression and is required for gastrulation movements in Drosophila.</title>
        <authorList>
            <person name="Zhang Y."/>
            <person name="Kong D."/>
            <person name="Reichl L."/>
            <person name="Vogt N."/>
            <person name="Wolf F."/>
            <person name="Grosshans J."/>
        </authorList>
    </citation>
    <scope>FUNCTION</scope>
    <scope>GLYCOSYLATION</scope>
</reference>
<reference key="11">
    <citation type="journal article" date="2019" name="PLoS Genet.">
        <title>Evolutionary rate covariation analysis of E-cadherin identifies Raskol as a regulator of cell adhesion and actin dynamics in Drosophila.</title>
        <authorList>
            <person name="Raza Q."/>
            <person name="Choi J.Y."/>
            <person name="Li Y."/>
            <person name="O'Dowd R.M."/>
            <person name="Watkins S.C."/>
            <person name="Chikina M."/>
            <person name="Hong Y."/>
            <person name="Clark N.L."/>
            <person name="Kwiatkowski A.V."/>
        </authorList>
    </citation>
    <scope>FUNCTION</scope>
    <scope>SUBCELLULAR LOCATION</scope>
    <scope>TISSUE SPECIFICITY</scope>
    <scope>DISRUPTION PHENOTYPE</scope>
</reference>
<organism>
    <name type="scientific">Drosophila melanogaster</name>
    <name type="common">Fruit fly</name>
    <dbReference type="NCBI Taxonomy" id="7227"/>
    <lineage>
        <taxon>Eukaryota</taxon>
        <taxon>Metazoa</taxon>
        <taxon>Ecdysozoa</taxon>
        <taxon>Arthropoda</taxon>
        <taxon>Hexapoda</taxon>
        <taxon>Insecta</taxon>
        <taxon>Pterygota</taxon>
        <taxon>Neoptera</taxon>
        <taxon>Endopterygota</taxon>
        <taxon>Diptera</taxon>
        <taxon>Brachycera</taxon>
        <taxon>Muscomorpha</taxon>
        <taxon>Ephydroidea</taxon>
        <taxon>Drosophilidae</taxon>
        <taxon>Drosophila</taxon>
        <taxon>Sophophora</taxon>
    </lineage>
</organism>
<sequence>MSTSVQRMSRSYHCINMSATPQAGHLNPAQQQTHQQHKRKCRDLGRRLIPARLLLGVIVAISLLSPALALHSPPDKNFSGDNRKPAFKNCAGYAPKVKEEQPENTYVLTVEAVDPDPDQVIRYSIVQSPFERPKFFINPSTGVIFTTHTFDRDEPIHEKFVFVTVQATDNGLPPLDDVCTFNVTIEDINDNAPAFNKARYDESMSENAQPDAVVMTISASDFDDGNNSLVEYEILRERDFQYFKIDKESGIIYLKRPIDKRPGQSYAIIVRAYNVVPDPPQDAQIEVRIRVVESSIKPPSFVNPIDTPIYLKENLKNFTHPIATLRAVSNMPDKPEVIFELNTGRTEQTNSKNTFVFNQIGNEVTISLGKTLDYEAITDYTLTMIVRNTHELGTEHQIKIQVEDVNDNIPYYTEVKSGTILENEPPGTPVMQVRAFDMDGTSANNIVSFELADNREYFTIDPNTGNITALTTFDREERDFYNVKVIASDNSPSSLFDNGEPNRGHQVFRISIGDKNDHKPHFQQDKYLAERLLEDANTNTEVIEVKAEDEDNASQILYSIESGNVGDAFKIGLKTGKITVNQKLDYETITEYELKVRAFDGIYDDYTTVVIKIEDVNDNPPVFKQDYSVTILEETTYDDCILTVEAYDPDIKDRNADQHIVYSIHQNDGNRWTIDNSGCLRLVKTLDRDPPNGHKNWQVLIKANDEDGVGTTVSTVKEVTVTLKDINDNAPFLINEMPVYWQENRNPGHVVQLQANDYDDTPGAGNFTFGIDSEATPDIKTKFSMDGDYLHANVQFDREAQKEYFIPIRISDSGVPRQSAVSILHLVIGDVNDNAMSEGSSRIFIYNYKGEAPETDIGRVFVDDLDDWDLEDKYFEWKDLPHDQFRLNPSTGMITMLVHTAEGEYDLSFVVTEDSMFVPRHSVDAYVTVVVRELPEEAVDKSGSIRFINVTKEEFISVPRDFQSPDALSLKDRLQLSLAKLFNTSVSNVDVFTVLQNENHTLDVRFSAHGSPYYAPEKLNGIVAQNQQRLENELDLQMLMVNIDECLIEKFKCEESCTNELHKSSVPYMIYSNTTSFVGVNAFVQAQCVCEAPLMRRCLNGGSPRYGENDVCDCIDGFTGPHCELVSVAFYGSGYAFYEPIAACNNTKISLEITPQIDQGLIMYLGPLNFNPLLAISDFLALELDNGYPVLTVDYGSGAIRIRHQHIKMVADRTYQLDIILQRTSIEMTVDNCRLSTCQTLGAPIGPNEFLNVNAPLQLGGTPVDLEQLGRQLNWTHVPNQKGFFGCIRNLTINEQTYNLGMPSVFRNIDSGCQQSVAVAFSFGIDRNFIIAIIVCLALLLIILLAVVVQKKQKNGWHEKDIDDIRETIINYEDEGGGERDTDYDLNVLRTQPFYEEKLYKDPHALQGNMRDPNDIPDIADFLGDKKENCDRDVGATTVDDVRHYAYEGDGNSDGSLSSLASCTDDGDLNFDYLSNFGPRFRKLADMYGEEPSDTDSNVDDDQGWRI</sequence>
<comment type="function">
    <text evidence="11 12 13 14 15">Cadherins are calcium-dependent cell adhesion proteins (PubMed:7958432). In connecting cells they preferentially interact with themselves in a homophilic manner; cadherins may thus contribute to the sorting of heterogeneous cell types (PubMed:7958432). During oogenesis, integral component of the guidance mechanisms that regulate the directional persistent collective migration of the border cell (BC) cluster through the nurse cells to the oocyte (PubMed:24855950, PubMed:30763317). Functions downstream of the two chemoattractant receptors, Pvr and Egfr, to promote BC adhesion between the leader cells of the migrating cluster and the surrounding nurse cells (PubMed:24855950). This adhesion increases Rac1 signaling in the leading cells, which in turn stabilizes DE-cadherin/DE-cadherin adhesions through the formation of forward-directed protrusions which attach/detach to the surrounding nurse cells in order to pull the cluster through the egg chamber to the oocyte (PubMed:24855950). Within the BC cluster, also promotes adhesion between BCs, and between BCs and polar cells which enables the lead BC to communicate direction to the other cells in the cluster, providing polarity to each individual cell and ensuring collective behavior (PubMed:24855950, PubMed:30763317). May function in cell intercalation in the lateral epidermis during germband extension (PubMed:24681004). Contributes to the determination of body left-right asymmetry by enhancing Myo31DF activity and inhibiting Myo61F activity (PubMed:22491943).</text>
</comment>
<comment type="subunit">
    <text evidence="7 10 11">Interacts (via cytoplasmic region) with Inx2 (via cytoplasmic loop) (PubMed:15047872). Interacts with Hakai (PubMed:19682089). Interacts with Myo31DF (PubMed:22491943).</text>
</comment>
<comment type="subcellular location">
    <subcellularLocation>
        <location evidence="17">Cell membrane</location>
        <topology evidence="16">Single-pass type I membrane protein</topology>
    </subcellularLocation>
    <subcellularLocation>
        <location evidence="14">Apical cell membrane</location>
        <topology evidence="2">Single-pass type I membrane protein</topology>
    </subcellularLocation>
    <text evidence="14">In stage 8 embryos (before border cell (BC) delimination), and during BC migration, colocalizes with raskol at the cell membranes of BCs and polar cells (PCs), and is enriched at the PC apical membrane. Also colocalizes with raskol in the aminoserosa cell contacts and the dorsal most ectodermal cells at the zippering interface.</text>
</comment>
<comment type="tissue specificity">
    <text evidence="8 13 14 15">In early stage 9 and stage 10 oocytes, expressed in border cells, strongly expressed in polar cells and very weakly expressed in the nurse cells (at protein level) (PubMed:24855950). In the embryo, expressed in the leading edge cells of the dorsal epidermis (at protein level) (PubMed:16831834, PubMed:30763317). Stage 10 embryos exhibit intense expression in epithelial cells (PubMed:7958432). Stage 14 embryos show expression in the hindgut (at the apical poles of cell-cell boundaries), at the apical junctions of tracheal cells and in the dorsal longitudinal trunk (PubMed:7958432). In stage 16 embryos the glial midline cells of the central nervous system show strong expression (PubMed:7958432).</text>
</comment>
<comment type="domain">
    <text evidence="1">Three calcium ions are usually bound at the interface of each cadherin domain and rigidify the connections, imparting a strong curvature to the full-length ectodomain.</text>
</comment>
<comment type="PTM">
    <text evidence="12">N-glycosylation is important for biosynthesis and function.</text>
</comment>
<comment type="disruption phenotype">
    <text evidence="11 13 14">RNAi-mediated knockdown in segment A8 of the male genital disk causes loss of the normal dextral rotation of the genital plate and results in a phenotype with no rotation (PubMed:22491943). During oocyte border cell migration, RNAi-mediated knockdown in either the border cells (BC) or in the surrounding nurse cells results in various BC migration defects such as BC deviating from their migration path or failing to sustain the directed, posterior movement (PubMed:24855950, PubMed:30763317). RNAi-mediated knockdown in the outer migratory BC disrupts distribution of Rac1 in the BC cluster but does not affect motility and cells remain clustered (PubMed:24855950). RNAi-mediated knockdown in oocyte polar cells (PCs) results in BC cluster dissociation in 80 percent of egg chambers (PubMed:30763317).</text>
</comment>
<comment type="miscellaneous">
    <text evidence="11">Overexpression in segment A8 of the male genital disk has no effect on the normal dextral rotation of the genital plate.</text>
</comment>